<gene>
    <name evidence="1" type="primary">rpsQ</name>
    <name type="ordered locus">SO_0240</name>
</gene>
<keyword id="KW-1185">Reference proteome</keyword>
<keyword id="KW-0687">Ribonucleoprotein</keyword>
<keyword id="KW-0689">Ribosomal protein</keyword>
<keyword id="KW-0694">RNA-binding</keyword>
<keyword id="KW-0699">rRNA-binding</keyword>
<accession>Q8EK60</accession>
<feature type="chain" id="PRO_0000233562" description="Small ribosomal subunit protein uS17">
    <location>
        <begin position="1"/>
        <end position="82"/>
    </location>
</feature>
<comment type="function">
    <text evidence="1">One of the primary rRNA binding proteins, it binds specifically to the 5'-end of 16S ribosomal RNA.</text>
</comment>
<comment type="subunit">
    <text evidence="1">Part of the 30S ribosomal subunit.</text>
</comment>
<comment type="similarity">
    <text evidence="1">Belongs to the universal ribosomal protein uS17 family.</text>
</comment>
<dbReference type="EMBL" id="AE014299">
    <property type="protein sequence ID" value="AAN53325.1"/>
    <property type="molecule type" value="Genomic_DNA"/>
</dbReference>
<dbReference type="RefSeq" id="NP_715880.1">
    <property type="nucleotide sequence ID" value="NC_004347.2"/>
</dbReference>
<dbReference type="RefSeq" id="WP_011070622.1">
    <property type="nucleotide sequence ID" value="NZ_CP053946.1"/>
</dbReference>
<dbReference type="SMR" id="Q8EK60"/>
<dbReference type="STRING" id="211586.SO_0240"/>
<dbReference type="PaxDb" id="211586-SO_0240"/>
<dbReference type="GeneID" id="94726195"/>
<dbReference type="KEGG" id="son:SO_0240"/>
<dbReference type="PATRIC" id="fig|211586.12.peg.228"/>
<dbReference type="eggNOG" id="COG0186">
    <property type="taxonomic scope" value="Bacteria"/>
</dbReference>
<dbReference type="HOGENOM" id="CLU_073626_1_1_6"/>
<dbReference type="OrthoDB" id="9811714at2"/>
<dbReference type="PhylomeDB" id="Q8EK60"/>
<dbReference type="BioCyc" id="SONE211586:G1GMP-229-MONOMER"/>
<dbReference type="Proteomes" id="UP000008186">
    <property type="component" value="Chromosome"/>
</dbReference>
<dbReference type="GO" id="GO:0022627">
    <property type="term" value="C:cytosolic small ribosomal subunit"/>
    <property type="evidence" value="ECO:0000318"/>
    <property type="project" value="GO_Central"/>
</dbReference>
<dbReference type="GO" id="GO:0019843">
    <property type="term" value="F:rRNA binding"/>
    <property type="evidence" value="ECO:0007669"/>
    <property type="project" value="UniProtKB-UniRule"/>
</dbReference>
<dbReference type="GO" id="GO:0003735">
    <property type="term" value="F:structural constituent of ribosome"/>
    <property type="evidence" value="ECO:0000318"/>
    <property type="project" value="GO_Central"/>
</dbReference>
<dbReference type="GO" id="GO:0006412">
    <property type="term" value="P:translation"/>
    <property type="evidence" value="ECO:0007669"/>
    <property type="project" value="UniProtKB-UniRule"/>
</dbReference>
<dbReference type="CDD" id="cd00364">
    <property type="entry name" value="Ribosomal_uS17"/>
    <property type="match status" value="1"/>
</dbReference>
<dbReference type="FunFam" id="2.40.50.140:FF:000014">
    <property type="entry name" value="30S ribosomal protein S17"/>
    <property type="match status" value="1"/>
</dbReference>
<dbReference type="Gene3D" id="2.40.50.140">
    <property type="entry name" value="Nucleic acid-binding proteins"/>
    <property type="match status" value="1"/>
</dbReference>
<dbReference type="HAMAP" id="MF_01345_B">
    <property type="entry name" value="Ribosomal_uS17_B"/>
    <property type="match status" value="1"/>
</dbReference>
<dbReference type="InterPro" id="IPR012340">
    <property type="entry name" value="NA-bd_OB-fold"/>
</dbReference>
<dbReference type="InterPro" id="IPR000266">
    <property type="entry name" value="Ribosomal_uS17"/>
</dbReference>
<dbReference type="InterPro" id="IPR019984">
    <property type="entry name" value="Ribosomal_uS17_bact/chlr"/>
</dbReference>
<dbReference type="InterPro" id="IPR019979">
    <property type="entry name" value="Ribosomal_uS17_CS"/>
</dbReference>
<dbReference type="NCBIfam" id="NF004123">
    <property type="entry name" value="PRK05610.1"/>
    <property type="match status" value="1"/>
</dbReference>
<dbReference type="NCBIfam" id="TIGR03635">
    <property type="entry name" value="uS17_bact"/>
    <property type="match status" value="1"/>
</dbReference>
<dbReference type="PANTHER" id="PTHR10744">
    <property type="entry name" value="40S RIBOSOMAL PROTEIN S11 FAMILY MEMBER"/>
    <property type="match status" value="1"/>
</dbReference>
<dbReference type="PANTHER" id="PTHR10744:SF1">
    <property type="entry name" value="SMALL RIBOSOMAL SUBUNIT PROTEIN US17M"/>
    <property type="match status" value="1"/>
</dbReference>
<dbReference type="Pfam" id="PF00366">
    <property type="entry name" value="Ribosomal_S17"/>
    <property type="match status" value="1"/>
</dbReference>
<dbReference type="PRINTS" id="PR00973">
    <property type="entry name" value="RIBOSOMALS17"/>
</dbReference>
<dbReference type="SUPFAM" id="SSF50249">
    <property type="entry name" value="Nucleic acid-binding proteins"/>
    <property type="match status" value="1"/>
</dbReference>
<dbReference type="PROSITE" id="PS00056">
    <property type="entry name" value="RIBOSOMAL_S17"/>
    <property type="match status" value="1"/>
</dbReference>
<reference key="1">
    <citation type="journal article" date="2002" name="Nat. Biotechnol.">
        <title>Genome sequence of the dissimilatory metal ion-reducing bacterium Shewanella oneidensis.</title>
        <authorList>
            <person name="Heidelberg J.F."/>
            <person name="Paulsen I.T."/>
            <person name="Nelson K.E."/>
            <person name="Gaidos E.J."/>
            <person name="Nelson W.C."/>
            <person name="Read T.D."/>
            <person name="Eisen J.A."/>
            <person name="Seshadri R."/>
            <person name="Ward N.L."/>
            <person name="Methe B.A."/>
            <person name="Clayton R.A."/>
            <person name="Meyer T."/>
            <person name="Tsapin A."/>
            <person name="Scott J."/>
            <person name="Beanan M.J."/>
            <person name="Brinkac L.M."/>
            <person name="Daugherty S.C."/>
            <person name="DeBoy R.T."/>
            <person name="Dodson R.J."/>
            <person name="Durkin A.S."/>
            <person name="Haft D.H."/>
            <person name="Kolonay J.F."/>
            <person name="Madupu R."/>
            <person name="Peterson J.D."/>
            <person name="Umayam L.A."/>
            <person name="White O."/>
            <person name="Wolf A.M."/>
            <person name="Vamathevan J.J."/>
            <person name="Weidman J.F."/>
            <person name="Impraim M."/>
            <person name="Lee K."/>
            <person name="Berry K.J."/>
            <person name="Lee C."/>
            <person name="Mueller J."/>
            <person name="Khouri H.M."/>
            <person name="Gill J."/>
            <person name="Utterback T.R."/>
            <person name="McDonald L.A."/>
            <person name="Feldblyum T.V."/>
            <person name="Smith H.O."/>
            <person name="Venter J.C."/>
            <person name="Nealson K.H."/>
            <person name="Fraser C.M."/>
        </authorList>
    </citation>
    <scope>NUCLEOTIDE SEQUENCE [LARGE SCALE GENOMIC DNA]</scope>
    <source>
        <strain>ATCC 700550 / JCM 31522 / CIP 106686 / LMG 19005 / NCIMB 14063 / MR-1</strain>
    </source>
</reference>
<sequence>MSDKIRTLQGRVTSNKMDKTITVAIERQVKHPIYGKYIKRTTKIHAHDEANQCNEGDVVAIRECRPLSKTKSWTLVEVVSKA</sequence>
<evidence type="ECO:0000255" key="1">
    <source>
        <dbReference type="HAMAP-Rule" id="MF_01345"/>
    </source>
</evidence>
<evidence type="ECO:0000305" key="2"/>
<proteinExistence type="inferred from homology"/>
<protein>
    <recommendedName>
        <fullName evidence="1">Small ribosomal subunit protein uS17</fullName>
    </recommendedName>
    <alternativeName>
        <fullName evidence="2">30S ribosomal protein S17</fullName>
    </alternativeName>
</protein>
<name>RS17_SHEON</name>
<organism>
    <name type="scientific">Shewanella oneidensis (strain ATCC 700550 / JCM 31522 / CIP 106686 / LMG 19005 / NCIMB 14063 / MR-1)</name>
    <dbReference type="NCBI Taxonomy" id="211586"/>
    <lineage>
        <taxon>Bacteria</taxon>
        <taxon>Pseudomonadati</taxon>
        <taxon>Pseudomonadota</taxon>
        <taxon>Gammaproteobacteria</taxon>
        <taxon>Alteromonadales</taxon>
        <taxon>Shewanellaceae</taxon>
        <taxon>Shewanella</taxon>
    </lineage>
</organism>